<keyword id="KW-0378">Hydrolase</keyword>
<keyword id="KW-0408">Iron</keyword>
<keyword id="KW-0479">Metal-binding</keyword>
<keyword id="KW-0648">Protein biosynthesis</keyword>
<keyword id="KW-1185">Reference proteome</keyword>
<proteinExistence type="inferred from homology"/>
<comment type="function">
    <text evidence="1">Removes the formyl group from the N-terminal Met of newly synthesized proteins. Requires at least a dipeptide for an efficient rate of reaction. N-terminal L-methionine is a prerequisite for activity but the enzyme has broad specificity at other positions.</text>
</comment>
<comment type="catalytic activity">
    <reaction evidence="1">
        <text>N-terminal N-formyl-L-methionyl-[peptide] + H2O = N-terminal L-methionyl-[peptide] + formate</text>
        <dbReference type="Rhea" id="RHEA:24420"/>
        <dbReference type="Rhea" id="RHEA-COMP:10639"/>
        <dbReference type="Rhea" id="RHEA-COMP:10640"/>
        <dbReference type="ChEBI" id="CHEBI:15377"/>
        <dbReference type="ChEBI" id="CHEBI:15740"/>
        <dbReference type="ChEBI" id="CHEBI:49298"/>
        <dbReference type="ChEBI" id="CHEBI:64731"/>
        <dbReference type="EC" id="3.5.1.88"/>
    </reaction>
</comment>
<comment type="cofactor">
    <cofactor evidence="1">
        <name>Fe(2+)</name>
        <dbReference type="ChEBI" id="CHEBI:29033"/>
    </cofactor>
    <text evidence="1">Binds 1 Fe(2+) ion.</text>
</comment>
<comment type="similarity">
    <text evidence="1">Belongs to the polypeptide deformylase family.</text>
</comment>
<feature type="chain" id="PRO_0000082773" description="Peptide deformylase 2">
    <location>
        <begin position="1"/>
        <end position="193"/>
    </location>
</feature>
<feature type="active site" evidence="1">
    <location>
        <position position="143"/>
    </location>
</feature>
<feature type="binding site" evidence="1">
    <location>
        <position position="100"/>
    </location>
    <ligand>
        <name>Fe cation</name>
        <dbReference type="ChEBI" id="CHEBI:24875"/>
    </ligand>
</feature>
<feature type="binding site" evidence="1">
    <location>
        <position position="142"/>
    </location>
    <ligand>
        <name>Fe cation</name>
        <dbReference type="ChEBI" id="CHEBI:24875"/>
    </ligand>
</feature>
<feature type="binding site" evidence="1">
    <location>
        <position position="146"/>
    </location>
    <ligand>
        <name>Fe cation</name>
        <dbReference type="ChEBI" id="CHEBI:24875"/>
    </ligand>
</feature>
<accession>Q8FMD0</accession>
<protein>
    <recommendedName>
        <fullName evidence="1">Peptide deformylase 2</fullName>
        <shortName evidence="1">PDF 2</shortName>
        <ecNumber evidence="1">3.5.1.88</ecNumber>
    </recommendedName>
    <alternativeName>
        <fullName evidence="1">Polypeptide deformylase 2</fullName>
    </alternativeName>
</protein>
<gene>
    <name evidence="1" type="primary">def2</name>
    <name type="ordered locus">CE2577</name>
</gene>
<dbReference type="EC" id="3.5.1.88" evidence="1"/>
<dbReference type="EMBL" id="BA000035">
    <property type="protein sequence ID" value="BAC19387.1"/>
    <property type="molecule type" value="Genomic_DNA"/>
</dbReference>
<dbReference type="RefSeq" id="WP_006769061.1">
    <property type="nucleotide sequence ID" value="NC_004369.1"/>
</dbReference>
<dbReference type="SMR" id="Q8FMD0"/>
<dbReference type="STRING" id="196164.gene:10743024"/>
<dbReference type="KEGG" id="cef:CE2577"/>
<dbReference type="eggNOG" id="COG0242">
    <property type="taxonomic scope" value="Bacteria"/>
</dbReference>
<dbReference type="HOGENOM" id="CLU_061901_1_2_11"/>
<dbReference type="OrthoDB" id="9804313at2"/>
<dbReference type="Proteomes" id="UP000001409">
    <property type="component" value="Chromosome"/>
</dbReference>
<dbReference type="GO" id="GO:0046872">
    <property type="term" value="F:metal ion binding"/>
    <property type="evidence" value="ECO:0007669"/>
    <property type="project" value="UniProtKB-KW"/>
</dbReference>
<dbReference type="GO" id="GO:0042586">
    <property type="term" value="F:peptide deformylase activity"/>
    <property type="evidence" value="ECO:0007669"/>
    <property type="project" value="UniProtKB-UniRule"/>
</dbReference>
<dbReference type="GO" id="GO:0043686">
    <property type="term" value="P:co-translational protein modification"/>
    <property type="evidence" value="ECO:0007669"/>
    <property type="project" value="TreeGrafter"/>
</dbReference>
<dbReference type="GO" id="GO:0006412">
    <property type="term" value="P:translation"/>
    <property type="evidence" value="ECO:0007669"/>
    <property type="project" value="UniProtKB-UniRule"/>
</dbReference>
<dbReference type="CDD" id="cd00487">
    <property type="entry name" value="Pep_deformylase"/>
    <property type="match status" value="1"/>
</dbReference>
<dbReference type="Gene3D" id="3.90.45.10">
    <property type="entry name" value="Peptide deformylase"/>
    <property type="match status" value="1"/>
</dbReference>
<dbReference type="HAMAP" id="MF_00163">
    <property type="entry name" value="Pep_deformylase"/>
    <property type="match status" value="1"/>
</dbReference>
<dbReference type="InterPro" id="IPR023635">
    <property type="entry name" value="Peptide_deformylase"/>
</dbReference>
<dbReference type="InterPro" id="IPR036821">
    <property type="entry name" value="Peptide_deformylase_sf"/>
</dbReference>
<dbReference type="NCBIfam" id="TIGR00079">
    <property type="entry name" value="pept_deformyl"/>
    <property type="match status" value="1"/>
</dbReference>
<dbReference type="NCBIfam" id="NF001159">
    <property type="entry name" value="PRK00150.1-3"/>
    <property type="match status" value="1"/>
</dbReference>
<dbReference type="NCBIfam" id="NF009483">
    <property type="entry name" value="PRK12846.1-4"/>
    <property type="match status" value="1"/>
</dbReference>
<dbReference type="PANTHER" id="PTHR10458">
    <property type="entry name" value="PEPTIDE DEFORMYLASE"/>
    <property type="match status" value="1"/>
</dbReference>
<dbReference type="PANTHER" id="PTHR10458:SF2">
    <property type="entry name" value="PEPTIDE DEFORMYLASE, MITOCHONDRIAL"/>
    <property type="match status" value="1"/>
</dbReference>
<dbReference type="Pfam" id="PF01327">
    <property type="entry name" value="Pep_deformylase"/>
    <property type="match status" value="1"/>
</dbReference>
<dbReference type="PIRSF" id="PIRSF004749">
    <property type="entry name" value="Pep_def"/>
    <property type="match status" value="1"/>
</dbReference>
<dbReference type="PRINTS" id="PR01576">
    <property type="entry name" value="PDEFORMYLASE"/>
</dbReference>
<dbReference type="SUPFAM" id="SSF56420">
    <property type="entry name" value="Peptide deformylase"/>
    <property type="match status" value="1"/>
</dbReference>
<reference key="1">
    <citation type="journal article" date="2003" name="Genome Res.">
        <title>Comparative complete genome sequence analysis of the amino acid replacements responsible for the thermostability of Corynebacterium efficiens.</title>
        <authorList>
            <person name="Nishio Y."/>
            <person name="Nakamura Y."/>
            <person name="Kawarabayasi Y."/>
            <person name="Usuda Y."/>
            <person name="Kimura E."/>
            <person name="Sugimoto S."/>
            <person name="Matsui K."/>
            <person name="Yamagishi A."/>
            <person name="Kikuchi H."/>
            <person name="Ikeo K."/>
            <person name="Gojobori T."/>
        </authorList>
    </citation>
    <scope>NUCLEOTIDE SEQUENCE [LARGE SCALE GENOMIC DNA]</scope>
    <source>
        <strain>DSM 44549 / YS-314 / AJ 12310 / JCM 11189 / NBRC 100395</strain>
    </source>
</reference>
<name>DEF2_COREF</name>
<organism>
    <name type="scientific">Corynebacterium efficiens (strain DSM 44549 / YS-314 / AJ 12310 / JCM 11189 / NBRC 100395)</name>
    <dbReference type="NCBI Taxonomy" id="196164"/>
    <lineage>
        <taxon>Bacteria</taxon>
        <taxon>Bacillati</taxon>
        <taxon>Actinomycetota</taxon>
        <taxon>Actinomycetes</taxon>
        <taxon>Mycobacteriales</taxon>
        <taxon>Corynebacteriaceae</taxon>
        <taxon>Corynebacterium</taxon>
    </lineage>
</organism>
<sequence length="193" mass="21168">MTVRPIVIHGDPVLHNPTREVTEPISELQELIADMYETMEVANGVGLAANQIGVSKRIFVFNCPDDEGTMHRGCFINPVLETSEIPETMPADDGSDEEGCLSVPGEGFPTGRADWAKVTGLNEDGEEWSMEGTGFLARCFQHEVGHLDGVVYTDTLIGRWKRLAKKTIKANGWTEPGLTWTPGVDEDPFGHDV</sequence>
<evidence type="ECO:0000255" key="1">
    <source>
        <dbReference type="HAMAP-Rule" id="MF_00163"/>
    </source>
</evidence>